<comment type="function">
    <text evidence="1">One of the primary rRNA binding proteins, it binds directly to 16S rRNA where it helps nucleate assembly of the platform of the 30S subunit by binding and bridging several RNA helices of the 16S rRNA.</text>
</comment>
<comment type="function">
    <text evidence="1">Forms an intersubunit bridge (bridge B4) with the 23S rRNA of the 50S subunit in the ribosome.</text>
</comment>
<comment type="subunit">
    <text evidence="1">Part of the 30S ribosomal subunit. Forms a bridge to the 50S subunit in the 70S ribosome, contacting the 23S rRNA.</text>
</comment>
<comment type="similarity">
    <text evidence="1">Belongs to the universal ribosomal protein uS15 family.</text>
</comment>
<organism>
    <name type="scientific">Mannheimia succiniciproducens (strain KCTC 0769BP / MBEL55E)</name>
    <dbReference type="NCBI Taxonomy" id="221988"/>
    <lineage>
        <taxon>Bacteria</taxon>
        <taxon>Pseudomonadati</taxon>
        <taxon>Pseudomonadota</taxon>
        <taxon>Gammaproteobacteria</taxon>
        <taxon>Pasteurellales</taxon>
        <taxon>Pasteurellaceae</taxon>
        <taxon>Basfia</taxon>
    </lineage>
</organism>
<reference key="1">
    <citation type="journal article" date="2004" name="Nat. Biotechnol.">
        <title>The genome sequence of the capnophilic rumen bacterium Mannheimia succiniciproducens.</title>
        <authorList>
            <person name="Hong S.H."/>
            <person name="Kim J.S."/>
            <person name="Lee S.Y."/>
            <person name="In Y.H."/>
            <person name="Choi S.S."/>
            <person name="Rih J.-K."/>
            <person name="Kim C.H."/>
            <person name="Jeong H."/>
            <person name="Hur C.G."/>
            <person name="Kim J.J."/>
        </authorList>
    </citation>
    <scope>NUCLEOTIDE SEQUENCE [LARGE SCALE GENOMIC DNA]</scope>
    <source>
        <strain>KCTC 0769BP / MBEL55E</strain>
    </source>
</reference>
<protein>
    <recommendedName>
        <fullName evidence="1">Small ribosomal subunit protein uS15</fullName>
    </recommendedName>
    <alternativeName>
        <fullName evidence="2">30S ribosomal protein S15</fullName>
    </alternativeName>
</protein>
<evidence type="ECO:0000255" key="1">
    <source>
        <dbReference type="HAMAP-Rule" id="MF_01343"/>
    </source>
</evidence>
<evidence type="ECO:0000305" key="2"/>
<dbReference type="EMBL" id="AE016827">
    <property type="protein sequence ID" value="AAU37306.1"/>
    <property type="molecule type" value="Genomic_DNA"/>
</dbReference>
<dbReference type="RefSeq" id="WP_011199878.1">
    <property type="nucleotide sequence ID" value="NC_006300.1"/>
</dbReference>
<dbReference type="SMR" id="Q65UQ4"/>
<dbReference type="STRING" id="221988.MS0699"/>
<dbReference type="KEGG" id="msu:MS0699"/>
<dbReference type="eggNOG" id="COG0184">
    <property type="taxonomic scope" value="Bacteria"/>
</dbReference>
<dbReference type="HOGENOM" id="CLU_148518_0_0_6"/>
<dbReference type="OrthoDB" id="9799262at2"/>
<dbReference type="Proteomes" id="UP000000607">
    <property type="component" value="Chromosome"/>
</dbReference>
<dbReference type="GO" id="GO:0022627">
    <property type="term" value="C:cytosolic small ribosomal subunit"/>
    <property type="evidence" value="ECO:0007669"/>
    <property type="project" value="TreeGrafter"/>
</dbReference>
<dbReference type="GO" id="GO:0019843">
    <property type="term" value="F:rRNA binding"/>
    <property type="evidence" value="ECO:0007669"/>
    <property type="project" value="UniProtKB-UniRule"/>
</dbReference>
<dbReference type="GO" id="GO:0003735">
    <property type="term" value="F:structural constituent of ribosome"/>
    <property type="evidence" value="ECO:0007669"/>
    <property type="project" value="InterPro"/>
</dbReference>
<dbReference type="GO" id="GO:0006412">
    <property type="term" value="P:translation"/>
    <property type="evidence" value="ECO:0007669"/>
    <property type="project" value="UniProtKB-UniRule"/>
</dbReference>
<dbReference type="CDD" id="cd00353">
    <property type="entry name" value="Ribosomal_S15p_S13e"/>
    <property type="match status" value="1"/>
</dbReference>
<dbReference type="FunFam" id="1.10.287.10:FF:000002">
    <property type="entry name" value="30S ribosomal protein S15"/>
    <property type="match status" value="1"/>
</dbReference>
<dbReference type="Gene3D" id="6.10.250.3130">
    <property type="match status" value="1"/>
</dbReference>
<dbReference type="Gene3D" id="1.10.287.10">
    <property type="entry name" value="S15/NS1, RNA-binding"/>
    <property type="match status" value="1"/>
</dbReference>
<dbReference type="HAMAP" id="MF_01343_B">
    <property type="entry name" value="Ribosomal_uS15_B"/>
    <property type="match status" value="1"/>
</dbReference>
<dbReference type="InterPro" id="IPR000589">
    <property type="entry name" value="Ribosomal_uS15"/>
</dbReference>
<dbReference type="InterPro" id="IPR005290">
    <property type="entry name" value="Ribosomal_uS15_bac-type"/>
</dbReference>
<dbReference type="InterPro" id="IPR009068">
    <property type="entry name" value="uS15_NS1_RNA-bd_sf"/>
</dbReference>
<dbReference type="NCBIfam" id="TIGR00952">
    <property type="entry name" value="S15_bact"/>
    <property type="match status" value="1"/>
</dbReference>
<dbReference type="PANTHER" id="PTHR23321">
    <property type="entry name" value="RIBOSOMAL PROTEIN S15, BACTERIAL AND ORGANELLAR"/>
    <property type="match status" value="1"/>
</dbReference>
<dbReference type="PANTHER" id="PTHR23321:SF26">
    <property type="entry name" value="SMALL RIBOSOMAL SUBUNIT PROTEIN US15M"/>
    <property type="match status" value="1"/>
</dbReference>
<dbReference type="Pfam" id="PF00312">
    <property type="entry name" value="Ribosomal_S15"/>
    <property type="match status" value="1"/>
</dbReference>
<dbReference type="SMART" id="SM01387">
    <property type="entry name" value="Ribosomal_S15"/>
    <property type="match status" value="1"/>
</dbReference>
<dbReference type="SUPFAM" id="SSF47060">
    <property type="entry name" value="S15/NS1 RNA-binding domain"/>
    <property type="match status" value="1"/>
</dbReference>
<dbReference type="PROSITE" id="PS00362">
    <property type="entry name" value="RIBOSOMAL_S15"/>
    <property type="match status" value="1"/>
</dbReference>
<keyword id="KW-0687">Ribonucleoprotein</keyword>
<keyword id="KW-0689">Ribosomal protein</keyword>
<keyword id="KW-0694">RNA-binding</keyword>
<keyword id="KW-0699">rRNA-binding</keyword>
<sequence>MSLSVEKKAAIVAEFGRDAKDTGSSEVQIALLTAQINHLQAHFAEHKKDHHGRRGLLRMVSRRRKLLDYLKRTDLAKYSETIARLGLRR</sequence>
<gene>
    <name evidence="1" type="primary">rpsO</name>
    <name type="ordered locus">MS0699</name>
</gene>
<name>RS15_MANSM</name>
<accession>Q65UQ4</accession>
<proteinExistence type="inferred from homology"/>
<feature type="chain" id="PRO_0000115467" description="Small ribosomal subunit protein uS15">
    <location>
        <begin position="1"/>
        <end position="89"/>
    </location>
</feature>